<reference key="1">
    <citation type="journal article" date="1999" name="Cell. Signal.">
        <title>Molecular cloning of magnesium-independent type 2 phosphatidic acid phosphatases from airway smooth muscle.</title>
        <authorList>
            <person name="Tate R.J."/>
            <person name="Tolan D."/>
            <person name="Pyne S."/>
        </authorList>
    </citation>
    <scope>NUCLEOTIDE SEQUENCE [MRNA] (ISOFORMS 1 AND 2)</scope>
    <source>
        <tissue>Airway smooth muscle</tissue>
    </source>
</reference>
<reference key="2">
    <citation type="journal article" date="2008" name="Biochem. J.">
        <title>Lipid phosphate phosphatases form homo- and hetero-oligomers: catalytic competency, subcellular distribution and function.</title>
        <authorList>
            <person name="Long J.S."/>
            <person name="Pyne N.J."/>
            <person name="Pyne S."/>
        </authorList>
    </citation>
    <scope>FUNCTION</scope>
    <scope>CATALYTIC ACTIVITY</scope>
    <scope>PATHWAY</scope>
    <scope>SUBUNIT</scope>
    <scope>MUTAGENESIS OF ARG-127 AND HIS-223</scope>
</reference>
<comment type="function">
    <text evidence="1 2 7">Magnesium-independent phospholipid phosphatase of the plasma membrane that catalyzes the dephosphorylation of a variety of glycerolipid and sphingolipid phosphate esters including phosphatidate/PA, lysophosphatidate/LPA, diacylglycerol pyrophosphate/DGPP, sphingosine 1-phosphate/S1P and ceramide 1-phosphate/C1P (PubMed:18215144). Also acts on N-oleoyl ethanolamine phosphate/N-(9Z-octadecenoyl)-ethanolamine phosphate, a potential physiological compound (By similarity). Through its extracellular phosphatase activity allows both the hydrolysis and the cellular uptake of these bioactive lipid mediators from the milieu, regulating signal transduction in different cellular processes (By similarity). It is for instance essential for the extracellular hydrolysis of S1P and subsequent conversion into intracellular S1P (By similarity). Involved in the regulation of inflammation, platelets activation, cell proliferation and migration among other processes (By similarity). May also have an intracellular activity to regulate phospholipid-mediated signaling pathways (By similarity).</text>
</comment>
<comment type="catalytic activity">
    <reaction evidence="7">
        <text>a 1,2-diacyl-sn-glycero-3-phosphate + H2O = a 1,2-diacyl-sn-glycerol + phosphate</text>
        <dbReference type="Rhea" id="RHEA:27429"/>
        <dbReference type="ChEBI" id="CHEBI:15377"/>
        <dbReference type="ChEBI" id="CHEBI:17815"/>
        <dbReference type="ChEBI" id="CHEBI:43474"/>
        <dbReference type="ChEBI" id="CHEBI:58608"/>
        <dbReference type="EC" id="3.1.3.4"/>
    </reaction>
    <physiologicalReaction direction="left-to-right" evidence="10">
        <dbReference type="Rhea" id="RHEA:27430"/>
    </physiologicalReaction>
</comment>
<comment type="catalytic activity">
    <reaction evidence="2">
        <text>1,2-dihexadecanoyl-sn-glycero-3-phosphate + H2O = 1,2-dihexadecanoyl-sn-glycerol + phosphate</text>
        <dbReference type="Rhea" id="RHEA:43236"/>
        <dbReference type="ChEBI" id="CHEBI:15377"/>
        <dbReference type="ChEBI" id="CHEBI:43474"/>
        <dbReference type="ChEBI" id="CHEBI:72859"/>
        <dbReference type="ChEBI" id="CHEBI:82929"/>
    </reaction>
    <physiologicalReaction direction="left-to-right" evidence="2">
        <dbReference type="Rhea" id="RHEA:43237"/>
    </physiologicalReaction>
</comment>
<comment type="catalytic activity">
    <reaction evidence="2">
        <text>1,2-di-(9Z-octadecenoyl)-sn-glycero-3-phosphate + H2O = 1,2-di-(9Z-octadecenoyl)-sn-glycerol + phosphate</text>
        <dbReference type="Rhea" id="RHEA:43244"/>
        <dbReference type="ChEBI" id="CHEBI:15377"/>
        <dbReference type="ChEBI" id="CHEBI:43474"/>
        <dbReference type="ChEBI" id="CHEBI:52333"/>
        <dbReference type="ChEBI" id="CHEBI:74546"/>
    </reaction>
    <physiologicalReaction direction="left-to-right" evidence="2">
        <dbReference type="Rhea" id="RHEA:43245"/>
    </physiologicalReaction>
</comment>
<comment type="catalytic activity">
    <reaction evidence="2">
        <text>a monoacyl-sn-glycero-3-phosphate + H2O = a monoacylglycerol + phosphate</text>
        <dbReference type="Rhea" id="RHEA:46736"/>
        <dbReference type="ChEBI" id="CHEBI:15377"/>
        <dbReference type="ChEBI" id="CHEBI:17408"/>
        <dbReference type="ChEBI" id="CHEBI:43474"/>
        <dbReference type="ChEBI" id="CHEBI:77589"/>
    </reaction>
    <physiologicalReaction direction="left-to-right" evidence="2">
        <dbReference type="Rhea" id="RHEA:46737"/>
    </physiologicalReaction>
</comment>
<comment type="catalytic activity">
    <reaction evidence="2">
        <text>(9Z)-octadecenoyl-sn-glycero-3-phosphate + H2O = (9Z-octadecenoyl)-glycerol + phosphate</text>
        <dbReference type="Rhea" id="RHEA:50884"/>
        <dbReference type="ChEBI" id="CHEBI:15377"/>
        <dbReference type="ChEBI" id="CHEBI:43474"/>
        <dbReference type="ChEBI" id="CHEBI:75937"/>
        <dbReference type="ChEBI" id="CHEBI:84973"/>
    </reaction>
    <physiologicalReaction direction="left-to-right" evidence="2">
        <dbReference type="Rhea" id="RHEA:50885"/>
    </physiologicalReaction>
</comment>
<comment type="catalytic activity">
    <reaction evidence="4">
        <text>a 1-acyl-sn-glycero-3-phosphate + H2O = a 1-acyl-sn-glycerol + phosphate</text>
        <dbReference type="Rhea" id="RHEA:33155"/>
        <dbReference type="ChEBI" id="CHEBI:15377"/>
        <dbReference type="ChEBI" id="CHEBI:43474"/>
        <dbReference type="ChEBI" id="CHEBI:57970"/>
        <dbReference type="ChEBI" id="CHEBI:64683"/>
        <dbReference type="EC" id="3.1.3.106"/>
    </reaction>
    <physiologicalReaction direction="left-to-right" evidence="4">
        <dbReference type="Rhea" id="RHEA:33156"/>
    </physiologicalReaction>
</comment>
<comment type="catalytic activity">
    <reaction evidence="4">
        <text>1-(9Z-octadecenoyl)-sn-glycero-3-phosphate + H2O = 1-(9Z-octadecenoyl)-sn-glycerol + phosphate</text>
        <dbReference type="Rhea" id="RHEA:39835"/>
        <dbReference type="ChEBI" id="CHEBI:15377"/>
        <dbReference type="ChEBI" id="CHEBI:43474"/>
        <dbReference type="ChEBI" id="CHEBI:74544"/>
        <dbReference type="ChEBI" id="CHEBI:75757"/>
    </reaction>
    <physiologicalReaction direction="left-to-right" evidence="4">
        <dbReference type="Rhea" id="RHEA:39836"/>
    </physiologicalReaction>
</comment>
<comment type="catalytic activity">
    <reaction evidence="4">
        <text>a 1,2-diacyl-sn-glycerol 3-diphosphate + H2O = a 1,2-diacyl-sn-glycero-3-phosphate + phosphate + H(+)</text>
        <dbReference type="Rhea" id="RHEA:27449"/>
        <dbReference type="ChEBI" id="CHEBI:15377"/>
        <dbReference type="ChEBI" id="CHEBI:15378"/>
        <dbReference type="ChEBI" id="CHEBI:43474"/>
        <dbReference type="ChEBI" id="CHEBI:58608"/>
        <dbReference type="ChEBI" id="CHEBI:59996"/>
        <dbReference type="EC" id="3.6.1.75"/>
    </reaction>
    <physiologicalReaction direction="left-to-right" evidence="4">
        <dbReference type="Rhea" id="RHEA:27450"/>
    </physiologicalReaction>
</comment>
<comment type="catalytic activity">
    <reaction evidence="2">
        <text>sphing-4-enine 1-phosphate + H2O = sphing-4-enine + phosphate</text>
        <dbReference type="Rhea" id="RHEA:27518"/>
        <dbReference type="ChEBI" id="CHEBI:15377"/>
        <dbReference type="ChEBI" id="CHEBI:43474"/>
        <dbReference type="ChEBI" id="CHEBI:57756"/>
        <dbReference type="ChEBI" id="CHEBI:60119"/>
    </reaction>
    <physiologicalReaction direction="left-to-right" evidence="2">
        <dbReference type="Rhea" id="RHEA:27519"/>
    </physiologicalReaction>
</comment>
<comment type="catalytic activity">
    <reaction evidence="2">
        <text>an N-acylsphing-4-enine 1-phosphate + H2O = an N-acylsphing-4-enine + phosphate</text>
        <dbReference type="Rhea" id="RHEA:33743"/>
        <dbReference type="ChEBI" id="CHEBI:15377"/>
        <dbReference type="ChEBI" id="CHEBI:43474"/>
        <dbReference type="ChEBI" id="CHEBI:52639"/>
        <dbReference type="ChEBI" id="CHEBI:57674"/>
    </reaction>
    <physiologicalReaction direction="left-to-right" evidence="2">
        <dbReference type="Rhea" id="RHEA:33744"/>
    </physiologicalReaction>
</comment>
<comment type="catalytic activity">
    <reaction evidence="2">
        <text>N-(octanoyl)-sphing-4-enine-1-phosphate + H2O = N-octanoylsphing-4-enine + phosphate</text>
        <dbReference type="Rhea" id="RHEA:62040"/>
        <dbReference type="ChEBI" id="CHEBI:15377"/>
        <dbReference type="ChEBI" id="CHEBI:43474"/>
        <dbReference type="ChEBI" id="CHEBI:45815"/>
        <dbReference type="ChEBI" id="CHEBI:85376"/>
    </reaction>
    <physiologicalReaction direction="left-to-right" evidence="2">
        <dbReference type="Rhea" id="RHEA:62041"/>
    </physiologicalReaction>
</comment>
<comment type="catalytic activity">
    <reaction evidence="2">
        <text>N-(9Z-octadecenoyl)-ethanolamine phosphate + H2O = N-(9Z-octadecenoyl) ethanolamine + phosphate</text>
        <dbReference type="Rhea" id="RHEA:62160"/>
        <dbReference type="ChEBI" id="CHEBI:15377"/>
        <dbReference type="ChEBI" id="CHEBI:43474"/>
        <dbReference type="ChEBI" id="CHEBI:71466"/>
        <dbReference type="ChEBI" id="CHEBI:145465"/>
    </reaction>
    <physiologicalReaction direction="left-to-right" evidence="2">
        <dbReference type="Rhea" id="RHEA:62161"/>
    </physiologicalReaction>
</comment>
<comment type="catalytic activity">
    <reaction evidence="1">
        <text>1-hexadecanoyl-2-(9Z-octadecenoyl)-sn-glycero-3-phosphate + H2O = 1-hexadecanoyl-2-(9Z-octadecenoyl)-sn-glycerol + phosphate</text>
        <dbReference type="Rhea" id="RHEA:41255"/>
        <dbReference type="ChEBI" id="CHEBI:15377"/>
        <dbReference type="ChEBI" id="CHEBI:43474"/>
        <dbReference type="ChEBI" id="CHEBI:64839"/>
        <dbReference type="ChEBI" id="CHEBI:75466"/>
    </reaction>
    <physiologicalReaction direction="left-to-right" evidence="1">
        <dbReference type="Rhea" id="RHEA:41256"/>
    </physiologicalReaction>
</comment>
<comment type="activity regulation">
    <text evidence="2">Magnesium-independent phospholipid phosphatase. Insensitive to N-ethylmaleimide.</text>
</comment>
<comment type="pathway">
    <text evidence="7">Lipid metabolism; phospholipid metabolism.</text>
</comment>
<comment type="subunit">
    <text evidence="7">Forms functional homodimers and homooligomers that are not required for substrate recognition and catalytic activity (PubMed:18215144). Can also form heterooligomers with PLPP2 and PLPP3 (PubMed:18215144).</text>
</comment>
<comment type="subcellular location">
    <subcellularLocation>
        <location evidence="2">Cell membrane</location>
        <topology evidence="5">Multi-pass membrane protein</topology>
    </subcellularLocation>
    <subcellularLocation>
        <location evidence="2">Apical cell membrane</location>
        <topology evidence="5">Multi-pass membrane protein</topology>
    </subcellularLocation>
    <subcellularLocation>
        <location evidence="2">Membrane raft</location>
        <topology evidence="5">Multi-pass membrane protein</topology>
    </subcellularLocation>
    <subcellularLocation>
        <location evidence="4">Membrane</location>
        <location evidence="4">Caveola</location>
        <topology evidence="5">Multi-pass membrane protein</topology>
    </subcellularLocation>
</comment>
<comment type="alternative products">
    <event type="alternative splicing"/>
    <isoform>
        <id>O88956-1</id>
        <name>1</name>
        <name>PAP2a1</name>
        <sequence type="displayed"/>
    </isoform>
    <isoform>
        <id>O88956-2</id>
        <name>2</name>
        <name>PAP2a2</name>
        <sequence type="described" ref="VSP_009650"/>
    </isoform>
</comment>
<comment type="PTM">
    <text evidence="4">N-glycosylated. N-linked sugars are of the complex type. N-glycosylation is not required for the phosphatase activity.</text>
</comment>
<comment type="similarity">
    <text evidence="9">Belongs to the PA-phosphatase related phosphoesterase family.</text>
</comment>
<protein>
    <recommendedName>
        <fullName evidence="9">Phospholipid phosphatase 1</fullName>
        <ecNumber evidence="2">3.1.3.-</ecNumber>
        <ecNumber evidence="4">3.1.3.106</ecNumber>
        <ecNumber evidence="7">3.1.3.4</ecNumber>
        <ecNumber evidence="4">3.6.1.75</ecNumber>
    </recommendedName>
    <alternativeName>
        <fullName>Lipid phosphate phosphohydrolase 1</fullName>
    </alternativeName>
    <alternativeName>
        <fullName>PAP2-alpha</fullName>
    </alternativeName>
    <alternativeName>
        <fullName>Phosphatidate phosphohydrolase type 2a</fullName>
    </alternativeName>
    <alternativeName>
        <fullName>Phosphatidic acid phosphatase 2a</fullName>
        <shortName>PAP-2a</shortName>
        <shortName>PAP2a</shortName>
    </alternativeName>
</protein>
<feature type="chain" id="PRO_0000220904" description="Phospholipid phosphatase 1">
    <location>
        <begin position="1"/>
        <end position="285"/>
    </location>
</feature>
<feature type="topological domain" description="Cytoplasmic" evidence="4">
    <location>
        <begin position="1"/>
        <end position="6"/>
    </location>
</feature>
<feature type="transmembrane region" description="Helical" evidence="5">
    <location>
        <begin position="7"/>
        <end position="27"/>
    </location>
</feature>
<feature type="topological domain" description="Extracellular" evidence="4">
    <location>
        <begin position="28"/>
        <end position="53"/>
    </location>
</feature>
<feature type="transmembrane region" description="Helical" evidence="5">
    <location>
        <begin position="54"/>
        <end position="74"/>
    </location>
</feature>
<feature type="topological domain" description="Cytoplasmic" evidence="4">
    <location>
        <begin position="75"/>
        <end position="94"/>
    </location>
</feature>
<feature type="transmembrane region" description="Helical" evidence="5">
    <location>
        <begin position="95"/>
        <end position="115"/>
    </location>
</feature>
<feature type="topological domain" description="Extracellular" evidence="4">
    <location>
        <begin position="116"/>
        <end position="165"/>
    </location>
</feature>
<feature type="transmembrane region" description="Helical" evidence="5">
    <location>
        <begin position="166"/>
        <end position="186"/>
    </location>
</feature>
<feature type="topological domain" description="Cytoplasmic" evidence="4">
    <location>
        <begin position="187"/>
        <end position="199"/>
    </location>
</feature>
<feature type="transmembrane region" description="Helical" evidence="5">
    <location>
        <begin position="200"/>
        <end position="220"/>
    </location>
</feature>
<feature type="topological domain" description="Extracellular" evidence="4">
    <location>
        <begin position="221"/>
        <end position="229"/>
    </location>
</feature>
<feature type="transmembrane region" description="Helical" evidence="5">
    <location>
        <begin position="230"/>
        <end position="250"/>
    </location>
</feature>
<feature type="topological domain" description="Cytoplasmic" evidence="4">
    <location>
        <begin position="251"/>
        <end position="285"/>
    </location>
</feature>
<feature type="region of interest" description="Phosphatase sequence motif I" evidence="3">
    <location>
        <begin position="120"/>
        <end position="128"/>
    </location>
</feature>
<feature type="region of interest" description="Phosphatase sequence motif II" evidence="3">
    <location>
        <begin position="168"/>
        <end position="171"/>
    </location>
</feature>
<feature type="region of interest" description="Phosphatase sequence motif III" evidence="3">
    <location>
        <begin position="216"/>
        <end position="227"/>
    </location>
</feature>
<feature type="region of interest" description="Disordered" evidence="6">
    <location>
        <begin position="260"/>
        <end position="285"/>
    </location>
</feature>
<feature type="short sequence motif" description="PDZ-binding; involved in localization to the apical cell membrane" evidence="2">
    <location>
        <begin position="5"/>
        <end position="7"/>
    </location>
</feature>
<feature type="compositionally biased region" description="Basic and acidic residues" evidence="6">
    <location>
        <begin position="260"/>
        <end position="269"/>
    </location>
</feature>
<feature type="active site" description="Proton donors" evidence="3">
    <location>
        <position position="171"/>
    </location>
</feature>
<feature type="active site" description="Nucleophile" evidence="3">
    <location>
        <position position="223"/>
    </location>
</feature>
<feature type="site" description="Stabilizes the active site histidine for nucleophilic attack" evidence="3">
    <location>
        <position position="227"/>
    </location>
</feature>
<feature type="glycosylation site" description="N-linked (GlcNAc...) asparagine" evidence="5">
    <location>
        <position position="142"/>
    </location>
</feature>
<feature type="splice variant" id="VSP_009650" description="In isoform 2." evidence="8">
    <original>GLPFAILTSRHTPFQRGIFCNDESIKYPYKEDTIPYALLGGIMIPFSIVV</original>
    <variation>SMPMAVLNLGQIYPFQRGFFCNDNSIQYPYHDSTVASTILTIVGLGLPISS</variation>
    <location>
        <begin position="21"/>
        <end position="70"/>
    </location>
</feature>
<feature type="mutagenesis site" description="Loss of lipid phosphatase activity." evidence="7">
    <original>R</original>
    <variation>K</variation>
    <location>
        <position position="127"/>
    </location>
</feature>
<feature type="mutagenesis site" description="Decreased lipid phosphatase activity." evidence="7">
    <original>H</original>
    <variation>L</variation>
    <location>
        <position position="223"/>
    </location>
</feature>
<feature type="sequence conflict" description="In Ref. 1; AAC63334." evidence="9" ref="1">
    <original>A</original>
    <variation>T</variation>
    <location>
        <position position="5"/>
    </location>
</feature>
<feature type="sequence conflict" description="In Ref. 1; AAC63334." evidence="9" ref="1">
    <original>I</original>
    <variation>V</variation>
    <location>
        <position position="218"/>
    </location>
</feature>
<organism>
    <name type="scientific">Cavia porcellus</name>
    <name type="common">Guinea pig</name>
    <dbReference type="NCBI Taxonomy" id="10141"/>
    <lineage>
        <taxon>Eukaryota</taxon>
        <taxon>Metazoa</taxon>
        <taxon>Chordata</taxon>
        <taxon>Craniata</taxon>
        <taxon>Vertebrata</taxon>
        <taxon>Euteleostomi</taxon>
        <taxon>Mammalia</taxon>
        <taxon>Eutheria</taxon>
        <taxon>Euarchontoglires</taxon>
        <taxon>Glires</taxon>
        <taxon>Rodentia</taxon>
        <taxon>Hystricomorpha</taxon>
        <taxon>Caviidae</taxon>
        <taxon>Cavia</taxon>
    </lineage>
</organism>
<dbReference type="EC" id="3.1.3.-" evidence="2"/>
<dbReference type="EC" id="3.1.3.106" evidence="4"/>
<dbReference type="EC" id="3.1.3.4" evidence="7"/>
<dbReference type="EC" id="3.6.1.75" evidence="4"/>
<dbReference type="EMBL" id="AF088283">
    <property type="protein sequence ID" value="AAC63333.1"/>
    <property type="molecule type" value="mRNA"/>
</dbReference>
<dbReference type="EMBL" id="AF088284">
    <property type="protein sequence ID" value="AAC63334.1"/>
    <property type="molecule type" value="mRNA"/>
</dbReference>
<dbReference type="RefSeq" id="NP_001166474.1">
    <property type="nucleotide sequence ID" value="NM_001173003.1"/>
</dbReference>
<dbReference type="FunCoup" id="O88956">
    <property type="interactions" value="576"/>
</dbReference>
<dbReference type="STRING" id="10141.ENSCPOP00000008809"/>
<dbReference type="GlyCosmos" id="O88956">
    <property type="glycosylation" value="1 site, No reported glycans"/>
</dbReference>
<dbReference type="GeneID" id="100135603"/>
<dbReference type="KEGG" id="cpoc:100135603"/>
<dbReference type="CTD" id="8611"/>
<dbReference type="eggNOG" id="KOG3030">
    <property type="taxonomic scope" value="Eukaryota"/>
</dbReference>
<dbReference type="InParanoid" id="O88956"/>
<dbReference type="OrthoDB" id="8907274at2759"/>
<dbReference type="UniPathway" id="UPA00085"/>
<dbReference type="Proteomes" id="UP000005447">
    <property type="component" value="Unassembled WGS sequence"/>
</dbReference>
<dbReference type="GO" id="GO:0016324">
    <property type="term" value="C:apical plasma membrane"/>
    <property type="evidence" value="ECO:0000250"/>
    <property type="project" value="UniProtKB"/>
</dbReference>
<dbReference type="GO" id="GO:0005901">
    <property type="term" value="C:caveola"/>
    <property type="evidence" value="ECO:0000250"/>
    <property type="project" value="UniProtKB"/>
</dbReference>
<dbReference type="GO" id="GO:0016020">
    <property type="term" value="C:membrane"/>
    <property type="evidence" value="ECO:0000250"/>
    <property type="project" value="UniProtKB"/>
</dbReference>
<dbReference type="GO" id="GO:0045121">
    <property type="term" value="C:membrane raft"/>
    <property type="evidence" value="ECO:0000250"/>
    <property type="project" value="UniProtKB"/>
</dbReference>
<dbReference type="GO" id="GO:0005886">
    <property type="term" value="C:plasma membrane"/>
    <property type="evidence" value="ECO:0000250"/>
    <property type="project" value="UniProtKB"/>
</dbReference>
<dbReference type="GO" id="GO:0106235">
    <property type="term" value="F:ceramide-1-phosphate phosphatase activity"/>
    <property type="evidence" value="ECO:0000250"/>
    <property type="project" value="UniProtKB"/>
</dbReference>
<dbReference type="GO" id="GO:0000810">
    <property type="term" value="F:diacylglycerol diphosphate phosphatase activity"/>
    <property type="evidence" value="ECO:0000250"/>
    <property type="project" value="UniProtKB"/>
</dbReference>
<dbReference type="GO" id="GO:0052642">
    <property type="term" value="F:lysophosphatidic acid phosphatase activity"/>
    <property type="evidence" value="ECO:0007669"/>
    <property type="project" value="UniProtKB-EC"/>
</dbReference>
<dbReference type="GO" id="GO:0008195">
    <property type="term" value="F:phosphatidate phosphatase activity"/>
    <property type="evidence" value="ECO:0000314"/>
    <property type="project" value="UniProtKB"/>
</dbReference>
<dbReference type="GO" id="GO:0042392">
    <property type="term" value="F:sphingosine-1-phosphate phosphatase activity"/>
    <property type="evidence" value="ECO:0000250"/>
    <property type="project" value="UniProtKB"/>
</dbReference>
<dbReference type="GO" id="GO:0006672">
    <property type="term" value="P:ceramide metabolic process"/>
    <property type="evidence" value="ECO:0000250"/>
    <property type="project" value="UniProtKB"/>
</dbReference>
<dbReference type="GO" id="GO:0046839">
    <property type="term" value="P:phospholipid dephosphorylation"/>
    <property type="evidence" value="ECO:0000314"/>
    <property type="project" value="UniProtKB"/>
</dbReference>
<dbReference type="GO" id="GO:0006644">
    <property type="term" value="P:phospholipid metabolic process"/>
    <property type="evidence" value="ECO:0000314"/>
    <property type="project" value="UniProtKB"/>
</dbReference>
<dbReference type="GO" id="GO:0007165">
    <property type="term" value="P:signal transduction"/>
    <property type="evidence" value="ECO:0000250"/>
    <property type="project" value="UniProtKB"/>
</dbReference>
<dbReference type="GO" id="GO:0006670">
    <property type="term" value="P:sphingosine metabolic process"/>
    <property type="evidence" value="ECO:0000250"/>
    <property type="project" value="UniProtKB"/>
</dbReference>
<dbReference type="CDD" id="cd03384">
    <property type="entry name" value="PAP2_wunen"/>
    <property type="match status" value="1"/>
</dbReference>
<dbReference type="FunFam" id="1.20.144.10:FF:000007">
    <property type="entry name" value="phospholipid phosphatase 1 isoform X2"/>
    <property type="match status" value="1"/>
</dbReference>
<dbReference type="Gene3D" id="1.20.144.10">
    <property type="entry name" value="Phosphatidic acid phosphatase type 2/haloperoxidase"/>
    <property type="match status" value="1"/>
</dbReference>
<dbReference type="InterPro" id="IPR036938">
    <property type="entry name" value="P_Acid_Pase_2/haloperoxi_sf"/>
</dbReference>
<dbReference type="InterPro" id="IPR000326">
    <property type="entry name" value="P_Acid_Pase_2/haloperoxidase"/>
</dbReference>
<dbReference type="InterPro" id="IPR043216">
    <property type="entry name" value="PA_PP_rel"/>
</dbReference>
<dbReference type="PANTHER" id="PTHR10165">
    <property type="entry name" value="LIPID PHOSPHATE PHOSPHATASE"/>
    <property type="match status" value="1"/>
</dbReference>
<dbReference type="PANTHER" id="PTHR10165:SF26">
    <property type="entry name" value="PHOSPHOLIPID PHOSPHATASE 1"/>
    <property type="match status" value="1"/>
</dbReference>
<dbReference type="Pfam" id="PF01569">
    <property type="entry name" value="PAP2"/>
    <property type="match status" value="1"/>
</dbReference>
<dbReference type="SMART" id="SM00014">
    <property type="entry name" value="acidPPc"/>
    <property type="match status" value="1"/>
</dbReference>
<dbReference type="SUPFAM" id="SSF48317">
    <property type="entry name" value="Acid phosphatase/Vanadium-dependent haloperoxidase"/>
    <property type="match status" value="1"/>
</dbReference>
<sequence length="285" mass="32133">MFDKARLPYVALDVLCVVLAGLPFAILTSRHTPFQRGIFCNDESIKYPYKEDTIPYALLGGIMIPFSIVVMIIGETLSVYCNLLHSNSFIRNNYIATIYKSIGTFLFGAAASQSLTDIAKYSIGRLRPHFLSVCDPDWSKVNCSDGYIEYYVCRGNAEKVKEGRLSFYSGHSSFSMYCMVFVALYLQARMKGDWARLLRPTLQFGLVAASIYVGLSRISDYKHHWSDVLTGLIQGAIVAILVAVYVSDFFKARNSPFQERKEEDSHTTLHETPTAGNHYRSNHQP</sequence>
<proteinExistence type="evidence at protein level"/>
<gene>
    <name evidence="2" type="primary">PLPP1</name>
    <name type="synonym">LPP1</name>
    <name type="synonym">PAP2A</name>
    <name type="synonym">PPAP2A</name>
</gene>
<evidence type="ECO:0000250" key="1">
    <source>
        <dbReference type="UniProtKB" id="O08564"/>
    </source>
</evidence>
<evidence type="ECO:0000250" key="2">
    <source>
        <dbReference type="UniProtKB" id="O14494"/>
    </source>
</evidence>
<evidence type="ECO:0000250" key="3">
    <source>
        <dbReference type="UniProtKB" id="O34349"/>
    </source>
</evidence>
<evidence type="ECO:0000250" key="4">
    <source>
        <dbReference type="UniProtKB" id="Q61469"/>
    </source>
</evidence>
<evidence type="ECO:0000255" key="5"/>
<evidence type="ECO:0000256" key="6">
    <source>
        <dbReference type="SAM" id="MobiDB-lite"/>
    </source>
</evidence>
<evidence type="ECO:0000269" key="7">
    <source>
    </source>
</evidence>
<evidence type="ECO:0000303" key="8">
    <source>
    </source>
</evidence>
<evidence type="ECO:0000305" key="9"/>
<evidence type="ECO:0000305" key="10">
    <source>
    </source>
</evidence>
<accession>O88956</accession>
<accession>O88957</accession>
<name>PLPP1_CAVPO</name>
<keyword id="KW-0025">Alternative splicing</keyword>
<keyword id="KW-1003">Cell membrane</keyword>
<keyword id="KW-0325">Glycoprotein</keyword>
<keyword id="KW-0378">Hydrolase</keyword>
<keyword id="KW-0443">Lipid metabolism</keyword>
<keyword id="KW-0472">Membrane</keyword>
<keyword id="KW-1185">Reference proteome</keyword>
<keyword id="KW-0812">Transmembrane</keyword>
<keyword id="KW-1133">Transmembrane helix</keyword>